<organism>
    <name type="scientific">Aedes aegypti</name>
    <name type="common">Yellowfever mosquito</name>
    <name type="synonym">Culex aegypti</name>
    <dbReference type="NCBI Taxonomy" id="7159"/>
    <lineage>
        <taxon>Eukaryota</taxon>
        <taxon>Metazoa</taxon>
        <taxon>Ecdysozoa</taxon>
        <taxon>Arthropoda</taxon>
        <taxon>Hexapoda</taxon>
        <taxon>Insecta</taxon>
        <taxon>Pterygota</taxon>
        <taxon>Neoptera</taxon>
        <taxon>Endopterygota</taxon>
        <taxon>Diptera</taxon>
        <taxon>Nematocera</taxon>
        <taxon>Culicoidea</taxon>
        <taxon>Culicidae</taxon>
        <taxon>Culicinae</taxon>
        <taxon>Aedini</taxon>
        <taxon>Aedes</taxon>
        <taxon>Stegomyia</taxon>
    </lineage>
</organism>
<reference key="1">
    <citation type="journal article" date="2007" name="Science">
        <title>Genome sequence of Aedes aegypti, a major arbovirus vector.</title>
        <authorList>
            <person name="Nene V."/>
            <person name="Wortman J.R."/>
            <person name="Lawson D."/>
            <person name="Haas B.J."/>
            <person name="Kodira C.D."/>
            <person name="Tu Z.J."/>
            <person name="Loftus B.J."/>
            <person name="Xi Z."/>
            <person name="Megy K."/>
            <person name="Grabherr M."/>
            <person name="Ren Q."/>
            <person name="Zdobnov E.M."/>
            <person name="Lobo N.F."/>
            <person name="Campbell K.S."/>
            <person name="Brown S.E."/>
            <person name="Bonaldo M.F."/>
            <person name="Zhu J."/>
            <person name="Sinkins S.P."/>
            <person name="Hogenkamp D.G."/>
            <person name="Amedeo P."/>
            <person name="Arensburger P."/>
            <person name="Atkinson P.W."/>
            <person name="Bidwell S.L."/>
            <person name="Biedler J."/>
            <person name="Birney E."/>
            <person name="Bruggner R.V."/>
            <person name="Costas J."/>
            <person name="Coy M.R."/>
            <person name="Crabtree J."/>
            <person name="Crawford M."/>
            <person name="DeBruyn B."/>
            <person name="DeCaprio D."/>
            <person name="Eiglmeier K."/>
            <person name="Eisenstadt E."/>
            <person name="El-Dorry H."/>
            <person name="Gelbart W.M."/>
            <person name="Gomes S.L."/>
            <person name="Hammond M."/>
            <person name="Hannick L.I."/>
            <person name="Hogan J.R."/>
            <person name="Holmes M.H."/>
            <person name="Jaffe D."/>
            <person name="Johnston S.J."/>
            <person name="Kennedy R.C."/>
            <person name="Koo H."/>
            <person name="Kravitz S."/>
            <person name="Kriventseva E.V."/>
            <person name="Kulp D."/>
            <person name="Labutti K."/>
            <person name="Lee E."/>
            <person name="Li S."/>
            <person name="Lovin D.D."/>
            <person name="Mao C."/>
            <person name="Mauceli E."/>
            <person name="Menck C.F."/>
            <person name="Miller J.R."/>
            <person name="Montgomery P."/>
            <person name="Mori A."/>
            <person name="Nascimento A.L."/>
            <person name="Naveira H.F."/>
            <person name="Nusbaum C."/>
            <person name="O'Leary S.B."/>
            <person name="Orvis J."/>
            <person name="Pertea M."/>
            <person name="Quesneville H."/>
            <person name="Reidenbach K.R."/>
            <person name="Rogers Y.-H.C."/>
            <person name="Roth C.W."/>
            <person name="Schneider J.R."/>
            <person name="Schatz M."/>
            <person name="Shumway M."/>
            <person name="Stanke M."/>
            <person name="Stinson E.O."/>
            <person name="Tubio J.M.C."/>
            <person name="Vanzee J.P."/>
            <person name="Verjovski-Almeida S."/>
            <person name="Werner D."/>
            <person name="White O.R."/>
            <person name="Wyder S."/>
            <person name="Zeng Q."/>
            <person name="Zhao Q."/>
            <person name="Zhao Y."/>
            <person name="Hill C.A."/>
            <person name="Raikhel A.S."/>
            <person name="Soares M.B."/>
            <person name="Knudson D.L."/>
            <person name="Lee N.H."/>
            <person name="Galagan J."/>
            <person name="Salzberg S.L."/>
            <person name="Paulsen I.T."/>
            <person name="Dimopoulos G."/>
            <person name="Collins F.H."/>
            <person name="Bruce B."/>
            <person name="Fraser-Liggett C.M."/>
            <person name="Severson D.W."/>
        </authorList>
    </citation>
    <scope>NUCLEOTIDE SEQUENCE [LARGE SCALE GENOMIC DNA]</scope>
    <source>
        <strain>LVPib12</strain>
    </source>
</reference>
<evidence type="ECO:0000250" key="1"/>
<evidence type="ECO:0000256" key="2">
    <source>
        <dbReference type="SAM" id="MobiDB-lite"/>
    </source>
</evidence>
<evidence type="ECO:0000305" key="3"/>
<evidence type="ECO:0007829" key="4">
    <source>
        <dbReference type="PDB" id="7JW2"/>
    </source>
</evidence>
<evidence type="ECO:0007829" key="5">
    <source>
        <dbReference type="PDB" id="7JW3"/>
    </source>
</evidence>
<comment type="function">
    <text evidence="1">Possesses 3'-5' exoribonuclease activity. Required for 3'-end trimming of AGO1-bound miRNAs (By similarity).</text>
</comment>
<comment type="cofactor">
    <cofactor evidence="1">
        <name>Mg(2+)</name>
        <dbReference type="ChEBI" id="CHEBI:18420"/>
    </cofactor>
</comment>
<comment type="similarity">
    <text evidence="3">Belongs to the mut-7 family.</text>
</comment>
<name>MUT7_AEDAE</name>
<gene>
    <name type="ORF">AAEL005527</name>
</gene>
<sequence>MSKSNNVAPPCRQDQLGFVPAGYDSDNNSEDEMLMVMPNASTSSGESGRCFDDERIKIVPHIGWRAGIGDRDFDIELDENIANWFEGFRDSFKTFKKGPLISQRLQMFYMNTRNPYEWSLKLFANCPDHNSPKSNSLAYTVLEEMRNFKKHYNLGTDQLVDDNLRMVAFNFVAKQGHCLLFRMVVDIFEFLQCRDLFIPKVREMIARKQYKEAGQIAIDLELFEEFDEHDFVMPLFMQDKISIAEDYLNKAERLQGPVVQLLDSFFDKRQSVESHCSRYITEHEVTDVYYSKLHQKPLSKLVQRLAKNYNIPRQFTPNVNKMKNFGALQFLVHKRYYEKSLNKDSWDEMVRDTVSETDRELQLELVCLCSNFNDQPEAAKWAFHYQLKRSDLPLLVQDYILEQEGNKQAPRTDFDDEQWDAPDSEPAHTLRLDESHVHLVDSKDKFYAMLSDLCRQSMIAFDSEWKPTFGGANEVSLIQLATWDDVYMIDVMVSQLEPLDWAALAKNVFNRDDVLKLSFAPSTDISMFQKALPSFNVMYSSQSTSAILDLQLLWRHVERFDSFRFPYHEESVNQNLANLVRLCLGKKLDKSNQFSNWAQRPLRKEQLRYAALDAFCLLEIYDAIEKQLTHIQLDPNEILNALLNDVRPPSDSGTRRAGRQDGSSGSRRNHRDKYNKRHAYAEDSNSGNSSRAHQNRTKSKGAGLREQQTFEGPNTKSVL</sequence>
<keyword id="KW-0002">3D-structure</keyword>
<keyword id="KW-0269">Exonuclease</keyword>
<keyword id="KW-0378">Hydrolase</keyword>
<keyword id="KW-0460">Magnesium</keyword>
<keyword id="KW-0479">Metal-binding</keyword>
<keyword id="KW-0540">Nuclease</keyword>
<keyword id="KW-1185">Reference proteome</keyword>
<dbReference type="EC" id="3.1.-.-"/>
<dbReference type="EMBL" id="CH477346">
    <property type="protein sequence ID" value="EAT42986.1"/>
    <property type="molecule type" value="Genomic_DNA"/>
</dbReference>
<dbReference type="RefSeq" id="XP_001651037.1">
    <property type="nucleotide sequence ID" value="XM_001650987.1"/>
</dbReference>
<dbReference type="PDB" id="7JW2">
    <property type="method" value="X-ray"/>
    <property type="resolution" value="1.50 A"/>
    <property type="chains" value="A/B=427-652"/>
</dbReference>
<dbReference type="PDB" id="7JW3">
    <property type="method" value="X-ray"/>
    <property type="resolution" value="3.05 A"/>
    <property type="chains" value="A/B/C=25-405"/>
</dbReference>
<dbReference type="PDBsum" id="7JW2"/>
<dbReference type="PDBsum" id="7JW3"/>
<dbReference type="SMR" id="Q179T2"/>
<dbReference type="FunCoup" id="Q179T2">
    <property type="interactions" value="635"/>
</dbReference>
<dbReference type="STRING" id="7159.Q179T2"/>
<dbReference type="PaxDb" id="7159-AAEL005527-PA"/>
<dbReference type="GeneID" id="5579811"/>
<dbReference type="KEGG" id="aag:5579811"/>
<dbReference type="CTD" id="35385"/>
<dbReference type="VEuPathDB" id="VectorBase:AAEL005527"/>
<dbReference type="eggNOG" id="KOG2207">
    <property type="taxonomic scope" value="Eukaryota"/>
</dbReference>
<dbReference type="HOGENOM" id="CLU_437604_0_0_1"/>
<dbReference type="InParanoid" id="Q179T2"/>
<dbReference type="OMA" id="EQCSNWQ"/>
<dbReference type="OrthoDB" id="18193at2759"/>
<dbReference type="PhylomeDB" id="Q179T2"/>
<dbReference type="Proteomes" id="UP000008820">
    <property type="component" value="Chromosome 1"/>
</dbReference>
<dbReference type="Proteomes" id="UP000682892">
    <property type="component" value="Unassembled WGS sequence"/>
</dbReference>
<dbReference type="GO" id="GO:0008408">
    <property type="term" value="F:3'-5' exonuclease activity"/>
    <property type="evidence" value="ECO:0007669"/>
    <property type="project" value="InterPro"/>
</dbReference>
<dbReference type="GO" id="GO:0046872">
    <property type="term" value="F:metal ion binding"/>
    <property type="evidence" value="ECO:0007669"/>
    <property type="project" value="UniProtKB-KW"/>
</dbReference>
<dbReference type="GO" id="GO:0003676">
    <property type="term" value="F:nucleic acid binding"/>
    <property type="evidence" value="ECO:0007669"/>
    <property type="project" value="InterPro"/>
</dbReference>
<dbReference type="GO" id="GO:0006139">
    <property type="term" value="P:nucleobase-containing compound metabolic process"/>
    <property type="evidence" value="ECO:0007669"/>
    <property type="project" value="InterPro"/>
</dbReference>
<dbReference type="CDD" id="cd06146">
    <property type="entry name" value="mut-7_like_exo"/>
    <property type="match status" value="1"/>
</dbReference>
<dbReference type="Gene3D" id="3.30.420.10">
    <property type="entry name" value="Ribonuclease H-like superfamily/Ribonuclease H"/>
    <property type="match status" value="1"/>
</dbReference>
<dbReference type="InterPro" id="IPR002562">
    <property type="entry name" value="3'-5'_exonuclease_dom"/>
</dbReference>
<dbReference type="InterPro" id="IPR052408">
    <property type="entry name" value="Exonuclease_MUT-7-like"/>
</dbReference>
<dbReference type="InterPro" id="IPR037432">
    <property type="entry name" value="Mut-7_DEDDy_dom"/>
</dbReference>
<dbReference type="InterPro" id="IPR012337">
    <property type="entry name" value="RNaseH-like_sf"/>
</dbReference>
<dbReference type="InterPro" id="IPR036397">
    <property type="entry name" value="RNaseH_sf"/>
</dbReference>
<dbReference type="PANTHER" id="PTHR47765">
    <property type="entry name" value="3'-5' EXONUCLEASE DOMAIN-CONTAINING PROTEIN"/>
    <property type="match status" value="1"/>
</dbReference>
<dbReference type="PANTHER" id="PTHR47765:SF2">
    <property type="entry name" value="EXONUCLEASE MUT-7 HOMOLOG"/>
    <property type="match status" value="1"/>
</dbReference>
<dbReference type="Pfam" id="PF01612">
    <property type="entry name" value="DNA_pol_A_exo1"/>
    <property type="match status" value="1"/>
</dbReference>
<dbReference type="SMART" id="SM00474">
    <property type="entry name" value="35EXOc"/>
    <property type="match status" value="1"/>
</dbReference>
<dbReference type="SUPFAM" id="SSF53098">
    <property type="entry name" value="Ribonuclease H-like"/>
    <property type="match status" value="1"/>
</dbReference>
<accession>Q179T2</accession>
<proteinExistence type="evidence at protein level"/>
<feature type="chain" id="PRO_0000319060" description="Exonuclease mut-7 homolog">
    <location>
        <begin position="1"/>
        <end position="719"/>
    </location>
</feature>
<feature type="domain" description="3'-5' exonuclease">
    <location>
        <begin position="575"/>
        <end position="629"/>
    </location>
</feature>
<feature type="region of interest" description="Disordered" evidence="2">
    <location>
        <begin position="1"/>
        <end position="22"/>
    </location>
</feature>
<feature type="region of interest" description="Disordered" evidence="2">
    <location>
        <begin position="644"/>
        <end position="719"/>
    </location>
</feature>
<feature type="compositionally biased region" description="Basic residues" evidence="2">
    <location>
        <begin position="667"/>
        <end position="678"/>
    </location>
</feature>
<feature type="compositionally biased region" description="Polar residues" evidence="2">
    <location>
        <begin position="683"/>
        <end position="692"/>
    </location>
</feature>
<feature type="compositionally biased region" description="Polar residues" evidence="2">
    <location>
        <begin position="706"/>
        <end position="719"/>
    </location>
</feature>
<feature type="helix" evidence="5">
    <location>
        <begin position="80"/>
        <end position="93"/>
    </location>
</feature>
<feature type="helix" evidence="5">
    <location>
        <begin position="99"/>
        <end position="111"/>
    </location>
</feature>
<feature type="helix" evidence="5">
    <location>
        <begin position="115"/>
        <end position="124"/>
    </location>
</feature>
<feature type="helix" evidence="5">
    <location>
        <begin position="127"/>
        <end position="130"/>
    </location>
</feature>
<feature type="helix" evidence="5">
    <location>
        <begin position="137"/>
        <end position="151"/>
    </location>
</feature>
<feature type="turn" evidence="5">
    <location>
        <begin position="157"/>
        <end position="159"/>
    </location>
</feature>
<feature type="helix" evidence="5">
    <location>
        <begin position="162"/>
        <end position="172"/>
    </location>
</feature>
<feature type="helix" evidence="5">
    <location>
        <begin position="178"/>
        <end position="188"/>
    </location>
</feature>
<feature type="helix" evidence="5">
    <location>
        <begin position="190"/>
        <end position="196"/>
    </location>
</feature>
<feature type="helix" evidence="5">
    <location>
        <begin position="198"/>
        <end position="206"/>
    </location>
</feature>
<feature type="helix" evidence="5">
    <location>
        <begin position="210"/>
        <end position="219"/>
    </location>
</feature>
<feature type="turn" evidence="5">
    <location>
        <begin position="223"/>
        <end position="225"/>
    </location>
</feature>
<feature type="turn" evidence="5">
    <location>
        <begin position="228"/>
        <end position="231"/>
    </location>
</feature>
<feature type="helix" evidence="5">
    <location>
        <begin position="232"/>
        <end position="237"/>
    </location>
</feature>
<feature type="helix" evidence="5">
    <location>
        <begin position="241"/>
        <end position="249"/>
    </location>
</feature>
<feature type="helix" evidence="5">
    <location>
        <begin position="252"/>
        <end position="266"/>
    </location>
</feature>
<feature type="helix" evidence="5">
    <location>
        <begin position="272"/>
        <end position="283"/>
    </location>
</feature>
<feature type="turn" evidence="5">
    <location>
        <begin position="290"/>
        <end position="292"/>
    </location>
</feature>
<feature type="helix" evidence="5">
    <location>
        <begin position="295"/>
        <end position="307"/>
    </location>
</feature>
<feature type="turn" evidence="5">
    <location>
        <begin position="308"/>
        <end position="310"/>
    </location>
</feature>
<feature type="helix" evidence="4">
    <location>
        <begin position="434"/>
        <end position="436"/>
    </location>
</feature>
<feature type="strand" evidence="4">
    <location>
        <begin position="437"/>
        <end position="440"/>
    </location>
</feature>
<feature type="helix" evidence="4">
    <location>
        <begin position="443"/>
        <end position="453"/>
    </location>
</feature>
<feature type="strand" evidence="4">
    <location>
        <begin position="457"/>
        <end position="465"/>
    </location>
</feature>
<feature type="strand" evidence="4">
    <location>
        <begin position="469"/>
        <end position="471"/>
    </location>
</feature>
<feature type="strand" evidence="4">
    <location>
        <begin position="475"/>
        <end position="481"/>
    </location>
</feature>
<feature type="strand" evidence="4">
    <location>
        <begin position="486"/>
        <end position="490"/>
    </location>
</feature>
<feature type="helix" evidence="4">
    <location>
        <begin position="491"/>
        <end position="494"/>
    </location>
</feature>
<feature type="helix" evidence="4">
    <location>
        <begin position="498"/>
        <end position="507"/>
    </location>
</feature>
<feature type="turn" evidence="4">
    <location>
        <begin position="508"/>
        <end position="510"/>
    </location>
</feature>
<feature type="strand" evidence="4">
    <location>
        <begin position="514"/>
        <end position="520"/>
    </location>
</feature>
<feature type="helix" evidence="4">
    <location>
        <begin position="522"/>
        <end position="531"/>
    </location>
</feature>
<feature type="strand" evidence="4">
    <location>
        <begin position="540"/>
        <end position="542"/>
    </location>
</feature>
<feature type="strand" evidence="4">
    <location>
        <begin position="547"/>
        <end position="549"/>
    </location>
</feature>
<feature type="helix" evidence="4">
    <location>
        <begin position="550"/>
        <end position="557"/>
    </location>
</feature>
<feature type="helix" evidence="4">
    <location>
        <begin position="576"/>
        <end position="584"/>
    </location>
</feature>
<feature type="turn" evidence="4">
    <location>
        <begin position="591"/>
        <end position="594"/>
    </location>
</feature>
<feature type="strand" evidence="4">
    <location>
        <begin position="599"/>
        <end position="601"/>
    </location>
</feature>
<feature type="helix" evidence="4">
    <location>
        <begin position="604"/>
        <end position="630"/>
    </location>
</feature>
<feature type="helix" evidence="4">
    <location>
        <begin position="635"/>
        <end position="642"/>
    </location>
</feature>
<protein>
    <recommendedName>
        <fullName>Exonuclease mut-7 homolog</fullName>
        <ecNumber>3.1.-.-</ecNumber>
    </recommendedName>
    <alternativeName>
        <fullName>Exonuclease 3'-5' domain-containing protein 3 homolog</fullName>
    </alternativeName>
</protein>